<proteinExistence type="inferred from homology"/>
<accession>A9BMQ0</accession>
<dbReference type="EMBL" id="CP000884">
    <property type="protein sequence ID" value="ABX37595.1"/>
    <property type="status" value="ALT_INIT"/>
    <property type="molecule type" value="Genomic_DNA"/>
</dbReference>
<dbReference type="SMR" id="A9BMQ0"/>
<dbReference type="STRING" id="398578.Daci_4966"/>
<dbReference type="KEGG" id="dac:Daci_4966"/>
<dbReference type="eggNOG" id="COG1295">
    <property type="taxonomic scope" value="Bacteria"/>
</dbReference>
<dbReference type="HOGENOM" id="CLU_032288_1_2_4"/>
<dbReference type="Proteomes" id="UP000000784">
    <property type="component" value="Chromosome"/>
</dbReference>
<dbReference type="GO" id="GO:0005886">
    <property type="term" value="C:plasma membrane"/>
    <property type="evidence" value="ECO:0007669"/>
    <property type="project" value="UniProtKB-SubCell"/>
</dbReference>
<dbReference type="HAMAP" id="MF_00672">
    <property type="entry name" value="UPF0761"/>
    <property type="match status" value="1"/>
</dbReference>
<dbReference type="InterPro" id="IPR023679">
    <property type="entry name" value="UPF0761_bac"/>
</dbReference>
<dbReference type="InterPro" id="IPR017039">
    <property type="entry name" value="Virul_fac_BrkB"/>
</dbReference>
<dbReference type="NCBIfam" id="TIGR00765">
    <property type="entry name" value="yihY_not_rbn"/>
    <property type="match status" value="1"/>
</dbReference>
<dbReference type="PANTHER" id="PTHR30213">
    <property type="entry name" value="INNER MEMBRANE PROTEIN YHJD"/>
    <property type="match status" value="1"/>
</dbReference>
<dbReference type="PANTHER" id="PTHR30213:SF0">
    <property type="entry name" value="UPF0761 MEMBRANE PROTEIN YIHY"/>
    <property type="match status" value="1"/>
</dbReference>
<dbReference type="Pfam" id="PF03631">
    <property type="entry name" value="Virul_fac_BrkB"/>
    <property type="match status" value="1"/>
</dbReference>
<organism>
    <name type="scientific">Delftia acidovorans (strain DSM 14801 / SPH-1)</name>
    <dbReference type="NCBI Taxonomy" id="398578"/>
    <lineage>
        <taxon>Bacteria</taxon>
        <taxon>Pseudomonadati</taxon>
        <taxon>Pseudomonadota</taxon>
        <taxon>Betaproteobacteria</taxon>
        <taxon>Burkholderiales</taxon>
        <taxon>Comamonadaceae</taxon>
        <taxon>Delftia</taxon>
    </lineage>
</organism>
<feature type="chain" id="PRO_0000391032" description="UPF0761 membrane protein Daci_4966">
    <location>
        <begin position="1"/>
        <end position="417"/>
    </location>
</feature>
<feature type="transmembrane region" description="Helical" evidence="1">
    <location>
        <begin position="49"/>
        <end position="69"/>
    </location>
</feature>
<feature type="transmembrane region" description="Helical" evidence="1">
    <location>
        <begin position="106"/>
        <end position="126"/>
    </location>
</feature>
<feature type="transmembrane region" description="Helical" evidence="1">
    <location>
        <begin position="146"/>
        <end position="166"/>
    </location>
</feature>
<feature type="transmembrane region" description="Helical" evidence="1">
    <location>
        <begin position="187"/>
        <end position="207"/>
    </location>
</feature>
<feature type="transmembrane region" description="Helical" evidence="1">
    <location>
        <begin position="235"/>
        <end position="255"/>
    </location>
</feature>
<feature type="transmembrane region" description="Helical" evidence="1">
    <location>
        <begin position="256"/>
        <end position="276"/>
    </location>
</feature>
<comment type="subcellular location">
    <subcellularLocation>
        <location evidence="1">Cell inner membrane</location>
        <topology evidence="1">Multi-pass membrane protein</topology>
    </subcellularLocation>
</comment>
<comment type="similarity">
    <text evidence="1">Belongs to the UPF0761 family.</text>
</comment>
<comment type="sequence caution" evidence="2">
    <conflict type="erroneous initiation">
        <sequence resource="EMBL-CDS" id="ABX37595"/>
    </conflict>
</comment>
<keyword id="KW-0997">Cell inner membrane</keyword>
<keyword id="KW-1003">Cell membrane</keyword>
<keyword id="KW-0472">Membrane</keyword>
<keyword id="KW-1185">Reference proteome</keyword>
<keyword id="KW-0812">Transmembrane</keyword>
<keyword id="KW-1133">Transmembrane helix</keyword>
<reference key="1">
    <citation type="submission" date="2007-11" db="EMBL/GenBank/DDBJ databases">
        <title>Complete sequence of Delftia acidovorans DSM 14801 / SPH-1.</title>
        <authorList>
            <person name="Copeland A."/>
            <person name="Lucas S."/>
            <person name="Lapidus A."/>
            <person name="Barry K."/>
            <person name="Glavina del Rio T."/>
            <person name="Dalin E."/>
            <person name="Tice H."/>
            <person name="Pitluck S."/>
            <person name="Lowry S."/>
            <person name="Clum A."/>
            <person name="Schmutz J."/>
            <person name="Larimer F."/>
            <person name="Land M."/>
            <person name="Hauser L."/>
            <person name="Kyrpides N."/>
            <person name="Kim E."/>
            <person name="Schleheck D."/>
            <person name="Richardson P."/>
        </authorList>
    </citation>
    <scope>NUCLEOTIDE SEQUENCE [LARGE SCALE GENOMIC DNA]</scope>
    <source>
        <strain>DSM 14801 / SPH-1</strain>
    </source>
</reference>
<sequence length="417" mass="46406">MERPEPVVPPSWRERLRCFPWRNTAHTLRERFREDRLGVTASSLTFTTVLALVPFFTVALALFTAFPIFSRVQIVLERWLIDSLIPETIARQVLGYLTQFASKASQLGMAGFSILVITAVALILTIDRTLNNIWRVRQLRPLGQRVLIYWAAITLGPLVLGLSLVLSSYVMSASRGLVNALPEGLRFIFDSIEYLALAAGMAGLYHYVPNTAVRWRHAWVGGLFVATCMELAKKALGLYLASVPTYSVIYGTFATLPILLIWIYMAWIIVLLGAVVTAYLPIVMAGVQRMPGQQGWQFEMAVEILQYLEQERESPAKGLYASDLARRLHVDWQQIDPVLQALSVLDWVGTVQAPGVAAGSEGTEPRYMLLVDPQHTPLAPLVERLLLAPSAAVQPLWERTGLAGMTLASLLESRPRP</sequence>
<name>Y4966_DELAS</name>
<protein>
    <recommendedName>
        <fullName evidence="1">UPF0761 membrane protein Daci_4966</fullName>
    </recommendedName>
</protein>
<evidence type="ECO:0000255" key="1">
    <source>
        <dbReference type="HAMAP-Rule" id="MF_00672"/>
    </source>
</evidence>
<evidence type="ECO:0000305" key="2"/>
<gene>
    <name type="ordered locus">Daci_4966</name>
</gene>